<keyword id="KW-0997">Cell inner membrane</keyword>
<keyword id="KW-1003">Cell membrane</keyword>
<keyword id="KW-0472">Membrane</keyword>
<keyword id="KW-0812">Transmembrane</keyword>
<keyword id="KW-1133">Transmembrane helix</keyword>
<name>MGRB_SALEP</name>
<protein>
    <recommendedName>
        <fullName evidence="1">PhoP/PhoQ regulator MgrB</fullName>
    </recommendedName>
</protein>
<organism>
    <name type="scientific">Salmonella enteritidis PT4 (strain P125109)</name>
    <dbReference type="NCBI Taxonomy" id="550537"/>
    <lineage>
        <taxon>Bacteria</taxon>
        <taxon>Pseudomonadati</taxon>
        <taxon>Pseudomonadota</taxon>
        <taxon>Gammaproteobacteria</taxon>
        <taxon>Enterobacterales</taxon>
        <taxon>Enterobacteriaceae</taxon>
        <taxon>Salmonella</taxon>
    </lineage>
</organism>
<feature type="chain" id="PRO_5000397747" description="PhoP/PhoQ regulator MgrB">
    <location>
        <begin position="1"/>
        <end position="47"/>
    </location>
</feature>
<feature type="transmembrane region" description="Helical" evidence="1">
    <location>
        <begin position="6"/>
        <end position="26"/>
    </location>
</feature>
<sequence length="47" mass="5520">MKKFRWVVLGIVVVVCLLLWAQVFNIMCDQDVQFFSGICAINKFIPW</sequence>
<comment type="function">
    <text evidence="1">PhoP-regulated transcription is redox-sensitive, being activated when the periplasm becomes more reducing. MgrB acts between DsbA/DsbB and PhoP/PhoQ in this pathway. Represses PhoP/PhoQ signaling, possibly by binding to the periplasmic domain of PhoQ, altering its activity and that of downstream effector PhoP.</text>
</comment>
<comment type="subunit">
    <text evidence="1">May form homooligomers. Probably interacts with the periplasmic domain of PhoQ.</text>
</comment>
<comment type="subcellular location">
    <subcellularLocation>
        <location evidence="1">Cell inner membrane</location>
        <topology evidence="1">Single-pass membrane protein</topology>
    </subcellularLocation>
</comment>
<comment type="similarity">
    <text evidence="1">Belongs to the MgrB family.</text>
</comment>
<dbReference type="EMBL" id="AM933172">
    <property type="protein sequence ID" value="CAR32778.1"/>
    <property type="molecule type" value="Genomic_DNA"/>
</dbReference>
<dbReference type="RefSeq" id="WP_000714547.1">
    <property type="nucleotide sequence ID" value="NC_011294.1"/>
</dbReference>
<dbReference type="GeneID" id="66756315"/>
<dbReference type="KEGG" id="set:SEN1197"/>
<dbReference type="HOGENOM" id="CLU_208030_1_0_6"/>
<dbReference type="Proteomes" id="UP000000613">
    <property type="component" value="Chromosome"/>
</dbReference>
<dbReference type="GO" id="GO:0005886">
    <property type="term" value="C:plasma membrane"/>
    <property type="evidence" value="ECO:0007669"/>
    <property type="project" value="UniProtKB-SubCell"/>
</dbReference>
<dbReference type="GO" id="GO:0070298">
    <property type="term" value="P:negative regulation of phosphorelay signal transduction system"/>
    <property type="evidence" value="ECO:0007669"/>
    <property type="project" value="UniProtKB-UniRule"/>
</dbReference>
<dbReference type="HAMAP" id="MF_01596">
    <property type="entry name" value="MgrB"/>
    <property type="match status" value="1"/>
</dbReference>
<dbReference type="InterPro" id="IPR020907">
    <property type="entry name" value="MgrB"/>
</dbReference>
<dbReference type="NCBIfam" id="NF007635">
    <property type="entry name" value="PRK10299.1"/>
    <property type="match status" value="1"/>
</dbReference>
<dbReference type="Pfam" id="PF13998">
    <property type="entry name" value="MgrB"/>
    <property type="match status" value="1"/>
</dbReference>
<accession>B5R2T1</accession>
<reference key="1">
    <citation type="journal article" date="2008" name="Genome Res.">
        <title>Comparative genome analysis of Salmonella enteritidis PT4 and Salmonella gallinarum 287/91 provides insights into evolutionary and host adaptation pathways.</title>
        <authorList>
            <person name="Thomson N.R."/>
            <person name="Clayton D.J."/>
            <person name="Windhorst D."/>
            <person name="Vernikos G."/>
            <person name="Davidson S."/>
            <person name="Churcher C."/>
            <person name="Quail M.A."/>
            <person name="Stevens M."/>
            <person name="Jones M.A."/>
            <person name="Watson M."/>
            <person name="Barron A."/>
            <person name="Layton A."/>
            <person name="Pickard D."/>
            <person name="Kingsley R.A."/>
            <person name="Bignell A."/>
            <person name="Clark L."/>
            <person name="Harris B."/>
            <person name="Ormond D."/>
            <person name="Abdellah Z."/>
            <person name="Brooks K."/>
            <person name="Cherevach I."/>
            <person name="Chillingworth T."/>
            <person name="Woodward J."/>
            <person name="Norberczak H."/>
            <person name="Lord A."/>
            <person name="Arrowsmith C."/>
            <person name="Jagels K."/>
            <person name="Moule S."/>
            <person name="Mungall K."/>
            <person name="Saunders M."/>
            <person name="Whitehead S."/>
            <person name="Chabalgoity J.A."/>
            <person name="Maskell D."/>
            <person name="Humphreys T."/>
            <person name="Roberts M."/>
            <person name="Barrow P.A."/>
            <person name="Dougan G."/>
            <person name="Parkhill J."/>
        </authorList>
    </citation>
    <scope>NUCLEOTIDE SEQUENCE [LARGE SCALE GENOMIC DNA]</scope>
    <source>
        <strain>P125109</strain>
    </source>
</reference>
<gene>
    <name evidence="1" type="primary">mgrB</name>
    <name type="ordered locus">SEN1197</name>
</gene>
<evidence type="ECO:0000255" key="1">
    <source>
        <dbReference type="HAMAP-Rule" id="MF_01596"/>
    </source>
</evidence>
<proteinExistence type="inferred from homology"/>